<reference key="1">
    <citation type="journal article" date="2007" name="PLoS ONE">
        <title>Complete genomic characterization of a pathogenic A.II strain of Francisella tularensis subspecies tularensis.</title>
        <authorList>
            <person name="Beckstrom-Sternberg S.M."/>
            <person name="Auerbach R.K."/>
            <person name="Godbole S."/>
            <person name="Pearson J.V."/>
            <person name="Beckstrom-Sternberg J.S."/>
            <person name="Deng Z."/>
            <person name="Munk C."/>
            <person name="Kubota K."/>
            <person name="Zhou Y."/>
            <person name="Bruce D."/>
            <person name="Noronha J."/>
            <person name="Scheuermann R.H."/>
            <person name="Wang A."/>
            <person name="Wei X."/>
            <person name="Wang J."/>
            <person name="Hao J."/>
            <person name="Wagner D.M."/>
            <person name="Brettin T.S."/>
            <person name="Brown N."/>
            <person name="Gilna P."/>
            <person name="Keim P.S."/>
        </authorList>
    </citation>
    <scope>NUCLEOTIDE SEQUENCE [LARGE SCALE GENOMIC DNA]</scope>
    <source>
        <strain>WY96-3418</strain>
    </source>
</reference>
<keyword id="KW-0067">ATP-binding</keyword>
<keyword id="KW-0143">Chaperone</keyword>
<keyword id="KW-0963">Cytoplasm</keyword>
<keyword id="KW-0547">Nucleotide-binding</keyword>
<keyword id="KW-0346">Stress response</keyword>
<organism>
    <name type="scientific">Francisella tularensis subsp. tularensis (strain WY96-3418)</name>
    <dbReference type="NCBI Taxonomy" id="418136"/>
    <lineage>
        <taxon>Bacteria</taxon>
        <taxon>Pseudomonadati</taxon>
        <taxon>Pseudomonadota</taxon>
        <taxon>Gammaproteobacteria</taxon>
        <taxon>Thiotrichales</taxon>
        <taxon>Francisellaceae</taxon>
        <taxon>Francisella</taxon>
    </lineage>
</organism>
<dbReference type="EMBL" id="CP000608">
    <property type="protein sequence ID" value="ABO47406.1"/>
    <property type="molecule type" value="Genomic_DNA"/>
</dbReference>
<dbReference type="RefSeq" id="WP_003027170.1">
    <property type="nucleotide sequence ID" value="NC_009257.1"/>
</dbReference>
<dbReference type="SMR" id="A4IZQ6"/>
<dbReference type="KEGG" id="ftw:FTW_1729"/>
<dbReference type="HOGENOM" id="CLU_006684_3_0_6"/>
<dbReference type="GO" id="GO:0005737">
    <property type="term" value="C:cytoplasm"/>
    <property type="evidence" value="ECO:0007669"/>
    <property type="project" value="UniProtKB-SubCell"/>
</dbReference>
<dbReference type="GO" id="GO:0005524">
    <property type="term" value="F:ATP binding"/>
    <property type="evidence" value="ECO:0007669"/>
    <property type="project" value="UniProtKB-UniRule"/>
</dbReference>
<dbReference type="GO" id="GO:0016887">
    <property type="term" value="F:ATP hydrolysis activity"/>
    <property type="evidence" value="ECO:0007669"/>
    <property type="project" value="InterPro"/>
</dbReference>
<dbReference type="GO" id="GO:0140662">
    <property type="term" value="F:ATP-dependent protein folding chaperone"/>
    <property type="evidence" value="ECO:0007669"/>
    <property type="project" value="InterPro"/>
</dbReference>
<dbReference type="GO" id="GO:0051082">
    <property type="term" value="F:unfolded protein binding"/>
    <property type="evidence" value="ECO:0007669"/>
    <property type="project" value="UniProtKB-UniRule"/>
</dbReference>
<dbReference type="CDD" id="cd16927">
    <property type="entry name" value="HATPase_Hsp90-like"/>
    <property type="match status" value="1"/>
</dbReference>
<dbReference type="FunFam" id="3.30.230.80:FF:000002">
    <property type="entry name" value="Molecular chaperone HtpG"/>
    <property type="match status" value="1"/>
</dbReference>
<dbReference type="FunFam" id="3.30.565.10:FF:000009">
    <property type="entry name" value="Molecular chaperone HtpG"/>
    <property type="match status" value="1"/>
</dbReference>
<dbReference type="Gene3D" id="3.30.230.80">
    <property type="match status" value="1"/>
</dbReference>
<dbReference type="Gene3D" id="3.40.50.11260">
    <property type="match status" value="1"/>
</dbReference>
<dbReference type="Gene3D" id="1.20.120.790">
    <property type="entry name" value="Heat shock protein 90, C-terminal domain"/>
    <property type="match status" value="1"/>
</dbReference>
<dbReference type="Gene3D" id="3.30.565.10">
    <property type="entry name" value="Histidine kinase-like ATPase, C-terminal domain"/>
    <property type="match status" value="1"/>
</dbReference>
<dbReference type="HAMAP" id="MF_00505">
    <property type="entry name" value="HSP90"/>
    <property type="match status" value="1"/>
</dbReference>
<dbReference type="InterPro" id="IPR036890">
    <property type="entry name" value="HATPase_C_sf"/>
</dbReference>
<dbReference type="InterPro" id="IPR019805">
    <property type="entry name" value="Heat_shock_protein_90_CS"/>
</dbReference>
<dbReference type="InterPro" id="IPR037196">
    <property type="entry name" value="HSP90_C"/>
</dbReference>
<dbReference type="InterPro" id="IPR001404">
    <property type="entry name" value="Hsp90_fam"/>
</dbReference>
<dbReference type="InterPro" id="IPR020575">
    <property type="entry name" value="Hsp90_N"/>
</dbReference>
<dbReference type="InterPro" id="IPR020568">
    <property type="entry name" value="Ribosomal_Su5_D2-typ_SF"/>
</dbReference>
<dbReference type="NCBIfam" id="NF003555">
    <property type="entry name" value="PRK05218.1"/>
    <property type="match status" value="1"/>
</dbReference>
<dbReference type="PANTHER" id="PTHR11528">
    <property type="entry name" value="HEAT SHOCK PROTEIN 90 FAMILY MEMBER"/>
    <property type="match status" value="1"/>
</dbReference>
<dbReference type="Pfam" id="PF13589">
    <property type="entry name" value="HATPase_c_3"/>
    <property type="match status" value="1"/>
</dbReference>
<dbReference type="Pfam" id="PF00183">
    <property type="entry name" value="HSP90"/>
    <property type="match status" value="1"/>
</dbReference>
<dbReference type="PIRSF" id="PIRSF002583">
    <property type="entry name" value="Hsp90"/>
    <property type="match status" value="1"/>
</dbReference>
<dbReference type="PRINTS" id="PR00775">
    <property type="entry name" value="HEATSHOCK90"/>
</dbReference>
<dbReference type="SMART" id="SM00387">
    <property type="entry name" value="HATPase_c"/>
    <property type="match status" value="1"/>
</dbReference>
<dbReference type="SUPFAM" id="SSF55874">
    <property type="entry name" value="ATPase domain of HSP90 chaperone/DNA topoisomerase II/histidine kinase"/>
    <property type="match status" value="1"/>
</dbReference>
<dbReference type="SUPFAM" id="SSF110942">
    <property type="entry name" value="HSP90 C-terminal domain"/>
    <property type="match status" value="1"/>
</dbReference>
<dbReference type="SUPFAM" id="SSF54211">
    <property type="entry name" value="Ribosomal protein S5 domain 2-like"/>
    <property type="match status" value="1"/>
</dbReference>
<dbReference type="PROSITE" id="PS00298">
    <property type="entry name" value="HSP90"/>
    <property type="match status" value="1"/>
</dbReference>
<evidence type="ECO:0000255" key="1">
    <source>
        <dbReference type="HAMAP-Rule" id="MF_00505"/>
    </source>
</evidence>
<sequence>MSEKKYTFETEVDKLLHLVIHSLYSNREIFLRELVSNSSDAIEKLRYESISNAALNEDDTDYAIRIDFDKDAKTITVSDNGIGMTEEEVIENLGTIAKSGTKKFLESLTGDKSKDNELIGQFGVGFYSSFIVADKVTVRTRKAGQDKSQATKWVSDAQNGFTVETITKEKRGTEVILHIKKEHLDLLEYHVLKGLVNKYSDCINTPIQMKKVEYDKDGKQTVKDEYETVNNTKAIWLRSKDEVTDEEYQEFYKYISHDFADALMWIHNKVEGNLEYNSLLYIPQNKPFDFWNRDKDYGLSLYVRRVFIMENKELLPPYLRFVKGVIDSADLPLNVSREILQHNKVIDKIKKAITTKILSELKKLASKDKEKYQKFWDSFGQVLKEGVSDDYSNKEKIAGLLRFATTQSGDSKQTVSLADYISRMKEGQDTIYYITSDSYKAAANNPQLEAFKKKGIEVILMTDRIDEWMMSTLTEFDGKHMKSIIKGDIDLDKFETPENKEKFEKEAKDFEKVLKEIKEVLKDKVEDVRLSKRLTDSPSCVVVNDYGMSLHMQKMMEEAGQSFMPGMGMKPILELNAEHNLVQKLKNEADTEIFADLSELLLLQAMFVEGAKIEDPMAFVKLVNKYIR</sequence>
<feature type="chain" id="PRO_1000014919" description="Chaperone protein HtpG">
    <location>
        <begin position="1"/>
        <end position="628"/>
    </location>
</feature>
<feature type="region of interest" description="A; substrate-binding" evidence="1">
    <location>
        <begin position="1"/>
        <end position="337"/>
    </location>
</feature>
<feature type="region of interest" description="B" evidence="1">
    <location>
        <begin position="338"/>
        <end position="554"/>
    </location>
</feature>
<feature type="region of interest" description="C" evidence="1">
    <location>
        <begin position="555"/>
        <end position="628"/>
    </location>
</feature>
<protein>
    <recommendedName>
        <fullName evidence="1">Chaperone protein HtpG</fullName>
    </recommendedName>
    <alternativeName>
        <fullName evidence="1">Heat shock protein HtpG</fullName>
    </alternativeName>
    <alternativeName>
        <fullName evidence="1">High temperature protein G</fullName>
    </alternativeName>
</protein>
<comment type="function">
    <text evidence="1">Molecular chaperone. Has ATPase activity.</text>
</comment>
<comment type="subunit">
    <text evidence="1">Homodimer.</text>
</comment>
<comment type="subcellular location">
    <subcellularLocation>
        <location evidence="1">Cytoplasm</location>
    </subcellularLocation>
</comment>
<comment type="similarity">
    <text evidence="1">Belongs to the heat shock protein 90 family.</text>
</comment>
<accession>A4IZQ6</accession>
<gene>
    <name evidence="1" type="primary">htpG</name>
    <name type="ordered locus">FTW_1729</name>
</gene>
<name>HTPG_FRATW</name>
<proteinExistence type="inferred from homology"/>